<sequence length="182" mass="20511">MQTEHVILLNAQGVPTGTLEKYAAHTADTLLHLAFSSWLFNAKGQLLVTRRALSKKAWPGVWTNSVCGHPQLGESSEDAVIRRCRYELGVEITPPESIYPDFRYRATDPRGIVENEVCPVFAARTTSALQINDDEVMDYQWCDLADVLRGIDATPWAFSPWMVMQATNREARIRLSAFTQLK</sequence>
<name>IDI_SHIF8</name>
<proteinExistence type="inferred from homology"/>
<feature type="chain" id="PRO_1000012177" description="Isopentenyl-diphosphate Delta-isomerase">
    <location>
        <begin position="1"/>
        <end position="182"/>
    </location>
</feature>
<feature type="domain" description="Nudix hydrolase">
    <location>
        <begin position="30"/>
        <end position="164"/>
    </location>
</feature>
<feature type="active site" evidence="1">
    <location>
        <position position="67"/>
    </location>
</feature>
<feature type="active site" evidence="1">
    <location>
        <position position="116"/>
    </location>
</feature>
<feature type="binding site" evidence="1">
    <location>
        <position position="25"/>
    </location>
    <ligand>
        <name>Mn(2+)</name>
        <dbReference type="ChEBI" id="CHEBI:29035"/>
    </ligand>
</feature>
<feature type="binding site" evidence="1">
    <location>
        <position position="32"/>
    </location>
    <ligand>
        <name>Mn(2+)</name>
        <dbReference type="ChEBI" id="CHEBI:29035"/>
    </ligand>
</feature>
<feature type="binding site" evidence="1">
    <location>
        <position position="69"/>
    </location>
    <ligand>
        <name>Mn(2+)</name>
        <dbReference type="ChEBI" id="CHEBI:29035"/>
    </ligand>
</feature>
<feature type="binding site" evidence="1">
    <location>
        <position position="87"/>
    </location>
    <ligand>
        <name>Mg(2+)</name>
        <dbReference type="ChEBI" id="CHEBI:18420"/>
    </ligand>
</feature>
<feature type="binding site" evidence="1">
    <location>
        <position position="114"/>
    </location>
    <ligand>
        <name>Mn(2+)</name>
        <dbReference type="ChEBI" id="CHEBI:29035"/>
    </ligand>
</feature>
<feature type="binding site" evidence="1">
    <location>
        <position position="116"/>
    </location>
    <ligand>
        <name>Mn(2+)</name>
        <dbReference type="ChEBI" id="CHEBI:29035"/>
    </ligand>
</feature>
<accession>Q0T107</accession>
<dbReference type="EC" id="5.3.3.2" evidence="1"/>
<dbReference type="EMBL" id="CP000266">
    <property type="protein sequence ID" value="ABF05008.1"/>
    <property type="molecule type" value="Genomic_DNA"/>
</dbReference>
<dbReference type="RefSeq" id="WP_001192802.1">
    <property type="nucleotide sequence ID" value="NC_008258.1"/>
</dbReference>
<dbReference type="SMR" id="Q0T107"/>
<dbReference type="KEGG" id="sfv:SFV_2937"/>
<dbReference type="HOGENOM" id="CLU_060552_2_0_6"/>
<dbReference type="UniPathway" id="UPA00059">
    <property type="reaction ID" value="UER00104"/>
</dbReference>
<dbReference type="Proteomes" id="UP000000659">
    <property type="component" value="Chromosome"/>
</dbReference>
<dbReference type="GO" id="GO:0005737">
    <property type="term" value="C:cytoplasm"/>
    <property type="evidence" value="ECO:0007669"/>
    <property type="project" value="UniProtKB-SubCell"/>
</dbReference>
<dbReference type="GO" id="GO:0004452">
    <property type="term" value="F:isopentenyl-diphosphate delta-isomerase activity"/>
    <property type="evidence" value="ECO:0007669"/>
    <property type="project" value="UniProtKB-UniRule"/>
</dbReference>
<dbReference type="GO" id="GO:0046872">
    <property type="term" value="F:metal ion binding"/>
    <property type="evidence" value="ECO:0007669"/>
    <property type="project" value="UniProtKB-KW"/>
</dbReference>
<dbReference type="GO" id="GO:0050992">
    <property type="term" value="P:dimethylallyl diphosphate biosynthetic process"/>
    <property type="evidence" value="ECO:0007669"/>
    <property type="project" value="UniProtKB-UniRule"/>
</dbReference>
<dbReference type="GO" id="GO:0008299">
    <property type="term" value="P:isoprenoid biosynthetic process"/>
    <property type="evidence" value="ECO:0007669"/>
    <property type="project" value="UniProtKB-KW"/>
</dbReference>
<dbReference type="CDD" id="cd02885">
    <property type="entry name" value="NUDIX_IPP_Isomerase"/>
    <property type="match status" value="1"/>
</dbReference>
<dbReference type="FunFam" id="3.90.79.10:FF:000009">
    <property type="entry name" value="Isopentenyl-diphosphate Delta-isomerase"/>
    <property type="match status" value="1"/>
</dbReference>
<dbReference type="Gene3D" id="3.90.79.10">
    <property type="entry name" value="Nucleoside Triphosphate Pyrophosphohydrolase"/>
    <property type="match status" value="1"/>
</dbReference>
<dbReference type="HAMAP" id="MF_00202">
    <property type="entry name" value="Idi"/>
    <property type="match status" value="1"/>
</dbReference>
<dbReference type="InterPro" id="IPR056375">
    <property type="entry name" value="Idi_bact"/>
</dbReference>
<dbReference type="InterPro" id="IPR011876">
    <property type="entry name" value="IsopentenylPP_isomerase_typ1"/>
</dbReference>
<dbReference type="InterPro" id="IPR015797">
    <property type="entry name" value="NUDIX_hydrolase-like_dom_sf"/>
</dbReference>
<dbReference type="InterPro" id="IPR000086">
    <property type="entry name" value="NUDIX_hydrolase_dom"/>
</dbReference>
<dbReference type="NCBIfam" id="TIGR02150">
    <property type="entry name" value="IPP_isom_1"/>
    <property type="match status" value="1"/>
</dbReference>
<dbReference type="NCBIfam" id="NF002995">
    <property type="entry name" value="PRK03759.1"/>
    <property type="match status" value="1"/>
</dbReference>
<dbReference type="PANTHER" id="PTHR10885">
    <property type="entry name" value="ISOPENTENYL-DIPHOSPHATE DELTA-ISOMERASE"/>
    <property type="match status" value="1"/>
</dbReference>
<dbReference type="PANTHER" id="PTHR10885:SF0">
    <property type="entry name" value="ISOPENTENYL-DIPHOSPHATE DELTA-ISOMERASE"/>
    <property type="match status" value="1"/>
</dbReference>
<dbReference type="Pfam" id="PF00293">
    <property type="entry name" value="NUDIX"/>
    <property type="match status" value="1"/>
</dbReference>
<dbReference type="PIRSF" id="PIRSF018427">
    <property type="entry name" value="Isopntndiph_ism"/>
    <property type="match status" value="1"/>
</dbReference>
<dbReference type="SUPFAM" id="SSF55811">
    <property type="entry name" value="Nudix"/>
    <property type="match status" value="1"/>
</dbReference>
<dbReference type="PROSITE" id="PS51462">
    <property type="entry name" value="NUDIX"/>
    <property type="match status" value="1"/>
</dbReference>
<comment type="function">
    <text evidence="1">Catalyzes the 1,3-allylic rearrangement of the homoallylic substrate isopentenyl (IPP) to its highly electrophilic allylic isomer, dimethylallyl diphosphate (DMAPP).</text>
</comment>
<comment type="catalytic activity">
    <reaction evidence="1">
        <text>isopentenyl diphosphate = dimethylallyl diphosphate</text>
        <dbReference type="Rhea" id="RHEA:23284"/>
        <dbReference type="ChEBI" id="CHEBI:57623"/>
        <dbReference type="ChEBI" id="CHEBI:128769"/>
        <dbReference type="EC" id="5.3.3.2"/>
    </reaction>
</comment>
<comment type="cofactor">
    <cofactor evidence="1">
        <name>Mg(2+)</name>
        <dbReference type="ChEBI" id="CHEBI:18420"/>
    </cofactor>
    <text evidence="1">Binds 1 Mg(2+) ion per subunit. The magnesium ion binds only when substrate is bound.</text>
</comment>
<comment type="cofactor">
    <cofactor evidence="1">
        <name>Mn(2+)</name>
        <dbReference type="ChEBI" id="CHEBI:29035"/>
    </cofactor>
    <text evidence="1">Binds 1 Mn(2+) ion per subunit.</text>
</comment>
<comment type="pathway">
    <text evidence="1">Isoprenoid biosynthesis; dimethylallyl diphosphate biosynthesis; dimethylallyl diphosphate from isopentenyl diphosphate: step 1/1.</text>
</comment>
<comment type="subunit">
    <text evidence="1">Homodimer.</text>
</comment>
<comment type="subcellular location">
    <subcellularLocation>
        <location evidence="1">Cytoplasm</location>
    </subcellularLocation>
</comment>
<comment type="similarity">
    <text evidence="1">Belongs to the IPP isomerase type 1 family.</text>
</comment>
<gene>
    <name evidence="1" type="primary">idi</name>
    <name type="ordered locus">SFV_2937</name>
</gene>
<protein>
    <recommendedName>
        <fullName evidence="1">Isopentenyl-diphosphate Delta-isomerase</fullName>
        <shortName evidence="1">IPP isomerase</shortName>
        <ecNumber evidence="1">5.3.3.2</ecNumber>
    </recommendedName>
    <alternativeName>
        <fullName evidence="1">IPP:DMAPP isomerase</fullName>
    </alternativeName>
    <alternativeName>
        <fullName evidence="1">Isopentenyl pyrophosphate isomerase</fullName>
    </alternativeName>
</protein>
<organism>
    <name type="scientific">Shigella flexneri serotype 5b (strain 8401)</name>
    <dbReference type="NCBI Taxonomy" id="373384"/>
    <lineage>
        <taxon>Bacteria</taxon>
        <taxon>Pseudomonadati</taxon>
        <taxon>Pseudomonadota</taxon>
        <taxon>Gammaproteobacteria</taxon>
        <taxon>Enterobacterales</taxon>
        <taxon>Enterobacteriaceae</taxon>
        <taxon>Shigella</taxon>
    </lineage>
</organism>
<reference key="1">
    <citation type="journal article" date="2006" name="BMC Genomics">
        <title>Complete genome sequence of Shigella flexneri 5b and comparison with Shigella flexneri 2a.</title>
        <authorList>
            <person name="Nie H."/>
            <person name="Yang F."/>
            <person name="Zhang X."/>
            <person name="Yang J."/>
            <person name="Chen L."/>
            <person name="Wang J."/>
            <person name="Xiong Z."/>
            <person name="Peng J."/>
            <person name="Sun L."/>
            <person name="Dong J."/>
            <person name="Xue Y."/>
            <person name="Xu X."/>
            <person name="Chen S."/>
            <person name="Yao Z."/>
            <person name="Shen Y."/>
            <person name="Jin Q."/>
        </authorList>
    </citation>
    <scope>NUCLEOTIDE SEQUENCE [LARGE SCALE GENOMIC DNA]</scope>
    <source>
        <strain>8401</strain>
    </source>
</reference>
<keyword id="KW-0963">Cytoplasm</keyword>
<keyword id="KW-0413">Isomerase</keyword>
<keyword id="KW-0414">Isoprene biosynthesis</keyword>
<keyword id="KW-0460">Magnesium</keyword>
<keyword id="KW-0464">Manganese</keyword>
<keyword id="KW-0479">Metal-binding</keyword>
<evidence type="ECO:0000255" key="1">
    <source>
        <dbReference type="HAMAP-Rule" id="MF_00202"/>
    </source>
</evidence>